<protein>
    <recommendedName>
        <fullName>Ubiquitin-like protein ATG12</fullName>
    </recommendedName>
    <alternativeName>
        <fullName>Autophagy-related protein 12</fullName>
    </alternativeName>
</protein>
<keyword id="KW-0072">Autophagy</keyword>
<keyword id="KW-1017">Isopeptide bond</keyword>
<keyword id="KW-0472">Membrane</keyword>
<keyword id="KW-0653">Protein transport</keyword>
<keyword id="KW-0813">Transport</keyword>
<keyword id="KW-0833">Ubl conjugation pathway</keyword>
<name>ATG12_PHANO</name>
<comment type="function">
    <text evidence="1">Ubiquitin-like protein involved in cytoplasm to vacuole transport (Cvt), autophagy vesicles formation, mitophagy, and nucleophagy. Conjugation with ATG5 through a ubiquitin-like conjugating system involving also ATG7 as an E1-like activating enzyme and ATG10 as an E2-like conjugating enzyme, is essential for its function. The ATG12-ATG5 conjugate functions as an E3-like enzyme which is required for lipidation of ATG8 and ATG8 association to the vesicle membranes (By similarity).</text>
</comment>
<comment type="subunit">
    <text evidence="1">Forms a conjugate with ATG5.</text>
</comment>
<comment type="subcellular location">
    <subcellularLocation>
        <location evidence="1">Preautophagosomal structure membrane</location>
        <topology evidence="1">Peripheral membrane protein</topology>
    </subcellularLocation>
</comment>
<comment type="similarity">
    <text evidence="2">Belongs to the ATG12 family.</text>
</comment>
<comment type="sequence caution" evidence="2">
    <conflict type="erroneous gene model prediction">
        <sequence resource="EMBL-CDS" id="EAT86384"/>
    </conflict>
</comment>
<reference key="1">
    <citation type="journal article" date="2007" name="Plant Cell">
        <title>Dothideomycete-plant interactions illuminated by genome sequencing and EST analysis of the wheat pathogen Stagonospora nodorum.</title>
        <authorList>
            <person name="Hane J.K."/>
            <person name="Lowe R.G.T."/>
            <person name="Solomon P.S."/>
            <person name="Tan K.-C."/>
            <person name="Schoch C.L."/>
            <person name="Spatafora J.W."/>
            <person name="Crous P.W."/>
            <person name="Kodira C.D."/>
            <person name="Birren B.W."/>
            <person name="Galagan J.E."/>
            <person name="Torriani S.F.F."/>
            <person name="McDonald B.A."/>
            <person name="Oliver R.P."/>
        </authorList>
    </citation>
    <scope>NUCLEOTIDE SEQUENCE [LARGE SCALE GENOMIC DNA]</scope>
    <source>
        <strain>SN15 / ATCC MYA-4574 / FGSC 10173</strain>
    </source>
</reference>
<evidence type="ECO:0000250" key="1"/>
<evidence type="ECO:0000305" key="2"/>
<proteinExistence type="inferred from homology"/>
<organism>
    <name type="scientific">Phaeosphaeria nodorum (strain SN15 / ATCC MYA-4574 / FGSC 10173)</name>
    <name type="common">Glume blotch fungus</name>
    <name type="synonym">Parastagonospora nodorum</name>
    <dbReference type="NCBI Taxonomy" id="321614"/>
    <lineage>
        <taxon>Eukaryota</taxon>
        <taxon>Fungi</taxon>
        <taxon>Dikarya</taxon>
        <taxon>Ascomycota</taxon>
        <taxon>Pezizomycotina</taxon>
        <taxon>Dothideomycetes</taxon>
        <taxon>Pleosporomycetidae</taxon>
        <taxon>Pleosporales</taxon>
        <taxon>Pleosporineae</taxon>
        <taxon>Phaeosphaeriaceae</taxon>
        <taxon>Parastagonospora</taxon>
    </lineage>
</organism>
<feature type="chain" id="PRO_0000317937" description="Ubiquitin-like protein ATG12">
    <location>
        <begin position="1"/>
        <end position="130"/>
    </location>
</feature>
<feature type="cross-link" description="Glycyl lysine isopeptide (Gly-Lys) (interchain with K-159 in ATG5)" evidence="1">
    <location>
        <position position="130"/>
    </location>
</feature>
<sequence length="130" mass="14049">MSAQEERIPEDDDTTEAPLTMAASVVLTNLPRDASKALETAGSLNVQKITVRLHPIGSAPALTQRVFKLSTNQRFDTIVRFLRKRLGVKEHESVFCYVGSVFAPGLDEGVGGLWSGEELVVGYAMAPAFG</sequence>
<accession>Q0UNW1</accession>
<gene>
    <name type="primary">ATG12</name>
    <name type="ORF">SNOG_06553</name>
</gene>
<dbReference type="EMBL" id="CH445333">
    <property type="protein sequence ID" value="EAT86384.2"/>
    <property type="status" value="ALT_SEQ"/>
    <property type="molecule type" value="Genomic_DNA"/>
</dbReference>
<dbReference type="RefSeq" id="XP_001796921.1">
    <property type="nucleotide sequence ID" value="XM_001796869.1"/>
</dbReference>
<dbReference type="SMR" id="Q0UNW1"/>
<dbReference type="STRING" id="321614.Q0UNW1"/>
<dbReference type="GeneID" id="5973800"/>
<dbReference type="KEGG" id="pno:SNOG_06553"/>
<dbReference type="VEuPathDB" id="FungiDB:JI435_065530"/>
<dbReference type="eggNOG" id="KOG3439">
    <property type="taxonomic scope" value="Eukaryota"/>
</dbReference>
<dbReference type="InParanoid" id="Q0UNW1"/>
<dbReference type="OMA" id="DLPMNMS"/>
<dbReference type="Proteomes" id="UP000001055">
    <property type="component" value="Unassembled WGS sequence"/>
</dbReference>
<dbReference type="GO" id="GO:0034274">
    <property type="term" value="C:Atg12-Atg5-Atg16 complex"/>
    <property type="evidence" value="ECO:0000318"/>
    <property type="project" value="GO_Central"/>
</dbReference>
<dbReference type="GO" id="GO:0000421">
    <property type="term" value="C:autophagosome membrane"/>
    <property type="evidence" value="ECO:0000318"/>
    <property type="project" value="GO_Central"/>
</dbReference>
<dbReference type="GO" id="GO:0034045">
    <property type="term" value="C:phagophore assembly site membrane"/>
    <property type="evidence" value="ECO:0000318"/>
    <property type="project" value="GO_Central"/>
</dbReference>
<dbReference type="GO" id="GO:0031386">
    <property type="term" value="F:protein tag activity"/>
    <property type="evidence" value="ECO:0000318"/>
    <property type="project" value="GO_Central"/>
</dbReference>
<dbReference type="GO" id="GO:0000045">
    <property type="term" value="P:autophagosome assembly"/>
    <property type="evidence" value="ECO:0000318"/>
    <property type="project" value="GO_Central"/>
</dbReference>
<dbReference type="GO" id="GO:0097352">
    <property type="term" value="P:autophagosome maturation"/>
    <property type="evidence" value="ECO:0000318"/>
    <property type="project" value="GO_Central"/>
</dbReference>
<dbReference type="GO" id="GO:0000422">
    <property type="term" value="P:autophagy of mitochondrion"/>
    <property type="evidence" value="ECO:0000318"/>
    <property type="project" value="GO_Central"/>
</dbReference>
<dbReference type="GO" id="GO:0061723">
    <property type="term" value="P:glycophagy"/>
    <property type="evidence" value="ECO:0000318"/>
    <property type="project" value="GO_Central"/>
</dbReference>
<dbReference type="GO" id="GO:0034727">
    <property type="term" value="P:piecemeal microautophagy of the nucleus"/>
    <property type="evidence" value="ECO:0000318"/>
    <property type="project" value="GO_Central"/>
</dbReference>
<dbReference type="GO" id="GO:0015031">
    <property type="term" value="P:protein transport"/>
    <property type="evidence" value="ECO:0007669"/>
    <property type="project" value="UniProtKB-KW"/>
</dbReference>
<dbReference type="CDD" id="cd01612">
    <property type="entry name" value="Ubl_ATG12"/>
    <property type="match status" value="1"/>
</dbReference>
<dbReference type="Gene3D" id="3.10.20.90">
    <property type="entry name" value="Phosphatidylinositol 3-kinase Catalytic Subunit, Chain A, domain 1"/>
    <property type="match status" value="1"/>
</dbReference>
<dbReference type="InterPro" id="IPR007242">
    <property type="entry name" value="Atg12"/>
</dbReference>
<dbReference type="InterPro" id="IPR029071">
    <property type="entry name" value="Ubiquitin-like_domsf"/>
</dbReference>
<dbReference type="PANTHER" id="PTHR13385">
    <property type="entry name" value="AUTOPHAGY PROTEIN 12"/>
    <property type="match status" value="1"/>
</dbReference>
<dbReference type="PANTHER" id="PTHR13385:SF0">
    <property type="entry name" value="UBIQUITIN-LIKE PROTEIN ATG12"/>
    <property type="match status" value="1"/>
</dbReference>
<dbReference type="Pfam" id="PF04110">
    <property type="entry name" value="APG12"/>
    <property type="match status" value="1"/>
</dbReference>
<dbReference type="SUPFAM" id="SSF54236">
    <property type="entry name" value="Ubiquitin-like"/>
    <property type="match status" value="1"/>
</dbReference>